<reference key="1">
    <citation type="journal article" date="2000" name="DNA Res.">
        <title>Prediction of the coding sequences of unidentified human genes. XVI. The complete sequences of 150 new cDNA clones from brain which code for large proteins in vitro.</title>
        <authorList>
            <person name="Nagase T."/>
            <person name="Kikuno R."/>
            <person name="Ishikawa K."/>
            <person name="Hirosawa M."/>
            <person name="Ohara O."/>
        </authorList>
    </citation>
    <scope>NUCLEOTIDE SEQUENCE [LARGE SCALE MRNA] (ISOFORM 1)</scope>
    <source>
        <tissue>Brain</tissue>
    </source>
</reference>
<reference key="2">
    <citation type="journal article" date="2005" name="Nature">
        <title>DNA sequence and analysis of human chromosome 18.</title>
        <authorList>
            <person name="Nusbaum C."/>
            <person name="Zody M.C."/>
            <person name="Borowsky M.L."/>
            <person name="Kamal M."/>
            <person name="Kodira C.D."/>
            <person name="Taylor T.D."/>
            <person name="Whittaker C.A."/>
            <person name="Chang J.L."/>
            <person name="Cuomo C.A."/>
            <person name="Dewar K."/>
            <person name="FitzGerald M.G."/>
            <person name="Yang X."/>
            <person name="Abouelleil A."/>
            <person name="Allen N.R."/>
            <person name="Anderson S."/>
            <person name="Bloom T."/>
            <person name="Bugalter B."/>
            <person name="Butler J."/>
            <person name="Cook A."/>
            <person name="DeCaprio D."/>
            <person name="Engels R."/>
            <person name="Garber M."/>
            <person name="Gnirke A."/>
            <person name="Hafez N."/>
            <person name="Hall J.L."/>
            <person name="Norman C.H."/>
            <person name="Itoh T."/>
            <person name="Jaffe D.B."/>
            <person name="Kuroki Y."/>
            <person name="Lehoczky J."/>
            <person name="Lui A."/>
            <person name="Macdonald P."/>
            <person name="Mauceli E."/>
            <person name="Mikkelsen T.S."/>
            <person name="Naylor J.W."/>
            <person name="Nicol R."/>
            <person name="Nguyen C."/>
            <person name="Noguchi H."/>
            <person name="O'Leary S.B."/>
            <person name="Piqani B."/>
            <person name="Smith C.L."/>
            <person name="Talamas J.A."/>
            <person name="Topham K."/>
            <person name="Totoki Y."/>
            <person name="Toyoda A."/>
            <person name="Wain H.M."/>
            <person name="Young S.K."/>
            <person name="Zeng Q."/>
            <person name="Zimmer A.R."/>
            <person name="Fujiyama A."/>
            <person name="Hattori M."/>
            <person name="Birren B.W."/>
            <person name="Sakaki Y."/>
            <person name="Lander E.S."/>
        </authorList>
    </citation>
    <scope>NUCLEOTIDE SEQUENCE [LARGE SCALE GENOMIC DNA]</scope>
</reference>
<reference key="3">
    <citation type="submission" date="2005-07" db="EMBL/GenBank/DDBJ databases">
        <authorList>
            <person name="Mural R.J."/>
            <person name="Istrail S."/>
            <person name="Sutton G.G."/>
            <person name="Florea L."/>
            <person name="Halpern A.L."/>
            <person name="Mobarry C.M."/>
            <person name="Lippert R."/>
            <person name="Walenz B."/>
            <person name="Shatkay H."/>
            <person name="Dew I."/>
            <person name="Miller J.R."/>
            <person name="Flanigan M.J."/>
            <person name="Edwards N.J."/>
            <person name="Bolanos R."/>
            <person name="Fasulo D."/>
            <person name="Halldorsson B.V."/>
            <person name="Hannenhalli S."/>
            <person name="Turner R."/>
            <person name="Yooseph S."/>
            <person name="Lu F."/>
            <person name="Nusskern D.R."/>
            <person name="Shue B.C."/>
            <person name="Zheng X.H."/>
            <person name="Zhong F."/>
            <person name="Delcher A.L."/>
            <person name="Huson D.H."/>
            <person name="Kravitz S.A."/>
            <person name="Mouchard L."/>
            <person name="Reinert K."/>
            <person name="Remington K.A."/>
            <person name="Clark A.G."/>
            <person name="Waterman M.S."/>
            <person name="Eichler E.E."/>
            <person name="Adams M.D."/>
            <person name="Hunkapiller M.W."/>
            <person name="Myers E.W."/>
            <person name="Venter J.C."/>
        </authorList>
    </citation>
    <scope>NUCLEOTIDE SEQUENCE [LARGE SCALE GENOMIC DNA]</scope>
</reference>
<reference key="4">
    <citation type="journal article" date="2004" name="Genome Res.">
        <title>The status, quality, and expansion of the NIH full-length cDNA project: the Mammalian Gene Collection (MGC).</title>
        <authorList>
            <consortium name="The MGC Project Team"/>
        </authorList>
    </citation>
    <scope>NUCLEOTIDE SEQUENCE [LARGE SCALE MRNA] (ISOFORM 2)</scope>
    <source>
        <tissue>Kidney</tissue>
    </source>
</reference>
<reference key="5">
    <citation type="journal article" date="2004" name="Nat. Genet.">
        <title>Complete sequencing and characterization of 21,243 full-length human cDNAs.</title>
        <authorList>
            <person name="Ota T."/>
            <person name="Suzuki Y."/>
            <person name="Nishikawa T."/>
            <person name="Otsuki T."/>
            <person name="Sugiyama T."/>
            <person name="Irie R."/>
            <person name="Wakamatsu A."/>
            <person name="Hayashi K."/>
            <person name="Sato H."/>
            <person name="Nagai K."/>
            <person name="Kimura K."/>
            <person name="Makita H."/>
            <person name="Sekine M."/>
            <person name="Obayashi M."/>
            <person name="Nishi T."/>
            <person name="Shibahara T."/>
            <person name="Tanaka T."/>
            <person name="Ishii S."/>
            <person name="Yamamoto J."/>
            <person name="Saito K."/>
            <person name="Kawai Y."/>
            <person name="Isono Y."/>
            <person name="Nakamura Y."/>
            <person name="Nagahari K."/>
            <person name="Murakami K."/>
            <person name="Yasuda T."/>
            <person name="Iwayanagi T."/>
            <person name="Wagatsuma M."/>
            <person name="Shiratori A."/>
            <person name="Sudo H."/>
            <person name="Hosoiri T."/>
            <person name="Kaku Y."/>
            <person name="Kodaira H."/>
            <person name="Kondo H."/>
            <person name="Sugawara M."/>
            <person name="Takahashi M."/>
            <person name="Kanda K."/>
            <person name="Yokoi T."/>
            <person name="Furuya T."/>
            <person name="Kikkawa E."/>
            <person name="Omura Y."/>
            <person name="Abe K."/>
            <person name="Kamihara K."/>
            <person name="Katsuta N."/>
            <person name="Sato K."/>
            <person name="Tanikawa M."/>
            <person name="Yamazaki M."/>
            <person name="Ninomiya K."/>
            <person name="Ishibashi T."/>
            <person name="Yamashita H."/>
            <person name="Murakawa K."/>
            <person name="Fujimori K."/>
            <person name="Tanai H."/>
            <person name="Kimata M."/>
            <person name="Watanabe M."/>
            <person name="Hiraoka S."/>
            <person name="Chiba Y."/>
            <person name="Ishida S."/>
            <person name="Ono Y."/>
            <person name="Takiguchi S."/>
            <person name="Watanabe S."/>
            <person name="Yosida M."/>
            <person name="Hotuta T."/>
            <person name="Kusano J."/>
            <person name="Kanehori K."/>
            <person name="Takahashi-Fujii A."/>
            <person name="Hara H."/>
            <person name="Tanase T.-O."/>
            <person name="Nomura Y."/>
            <person name="Togiya S."/>
            <person name="Komai F."/>
            <person name="Hara R."/>
            <person name="Takeuchi K."/>
            <person name="Arita M."/>
            <person name="Imose N."/>
            <person name="Musashino K."/>
            <person name="Yuuki H."/>
            <person name="Oshima A."/>
            <person name="Sasaki N."/>
            <person name="Aotsuka S."/>
            <person name="Yoshikawa Y."/>
            <person name="Matsunawa H."/>
            <person name="Ichihara T."/>
            <person name="Shiohata N."/>
            <person name="Sano S."/>
            <person name="Moriya S."/>
            <person name="Momiyama H."/>
            <person name="Satoh N."/>
            <person name="Takami S."/>
            <person name="Terashima Y."/>
            <person name="Suzuki O."/>
            <person name="Nakagawa S."/>
            <person name="Senoh A."/>
            <person name="Mizoguchi H."/>
            <person name="Goto Y."/>
            <person name="Shimizu F."/>
            <person name="Wakebe H."/>
            <person name="Hishigaki H."/>
            <person name="Watanabe T."/>
            <person name="Sugiyama A."/>
            <person name="Takemoto M."/>
            <person name="Kawakami B."/>
            <person name="Yamazaki M."/>
            <person name="Watanabe K."/>
            <person name="Kumagai A."/>
            <person name="Itakura S."/>
            <person name="Fukuzumi Y."/>
            <person name="Fujimori Y."/>
            <person name="Komiyama M."/>
            <person name="Tashiro H."/>
            <person name="Tanigami A."/>
            <person name="Fujiwara T."/>
            <person name="Ono T."/>
            <person name="Yamada K."/>
            <person name="Fujii Y."/>
            <person name="Ozaki K."/>
            <person name="Hirao M."/>
            <person name="Ohmori Y."/>
            <person name="Kawabata A."/>
            <person name="Hikiji T."/>
            <person name="Kobatake N."/>
            <person name="Inagaki H."/>
            <person name="Ikema Y."/>
            <person name="Okamoto S."/>
            <person name="Okitani R."/>
            <person name="Kawakami T."/>
            <person name="Noguchi S."/>
            <person name="Itoh T."/>
            <person name="Shigeta K."/>
            <person name="Senba T."/>
            <person name="Matsumura K."/>
            <person name="Nakajima Y."/>
            <person name="Mizuno T."/>
            <person name="Morinaga M."/>
            <person name="Sasaki M."/>
            <person name="Togashi T."/>
            <person name="Oyama M."/>
            <person name="Hata H."/>
            <person name="Watanabe M."/>
            <person name="Komatsu T."/>
            <person name="Mizushima-Sugano J."/>
            <person name="Satoh T."/>
            <person name="Shirai Y."/>
            <person name="Takahashi Y."/>
            <person name="Nakagawa K."/>
            <person name="Okumura K."/>
            <person name="Nagase T."/>
            <person name="Nomura N."/>
            <person name="Kikuchi H."/>
            <person name="Masuho Y."/>
            <person name="Yamashita R."/>
            <person name="Nakai K."/>
            <person name="Yada T."/>
            <person name="Nakamura Y."/>
            <person name="Ohara O."/>
            <person name="Isogai T."/>
            <person name="Sugano S."/>
        </authorList>
    </citation>
    <scope>NUCLEOTIDE SEQUENCE [LARGE SCALE MRNA] OF 126-628 (ISOFORM 1)</scope>
    <source>
        <tissue>Brain</tissue>
    </source>
</reference>
<reference key="6">
    <citation type="journal article" date="2009" name="J. Biol. Chem.">
        <title>Printor, a novel torsinA-interacting protein implicated in dystonia pathogenesis.</title>
        <authorList>
            <person name="Giles L.M."/>
            <person name="Li L."/>
            <person name="Chin L.S."/>
        </authorList>
    </citation>
    <scope>INTERACTION WITH TOR1A</scope>
    <scope>SUBCELLULAR LOCATION</scope>
</reference>
<sequence length="628" mass="70714">MSRSGDRTSTFDPSHSDNLLHGLNLLWRKQLFCDVTLTAQGQQFHCHKAVLASCSQYFRSLFSSHPPLGGGVGGQDGLGAPKDQQQPPQQQPSQQQQPPPQEEPGTPSSSPDDKLLTSPRAINNLVLQGCSSIGLRLVLEYLYTANVTLSLDTVEEVLSVSKILHIPQVTKLCVQFLNDQISVQNYKQVCKIAALHGLEETKKLANKYLVEDVLLLNFEEMRALLDSLPPPVESELALFQMSVLWLEHDRETRMQYAPDLMKRLRFALIPAPELVERVQSVDFMRTDPVCQKLLLDAMNYHLMPFRQHCRQSLASRIRSNKKMLLLVGGLPPGPDRLPSNLVQYYDDEKKTWKILTIMPYNSAHHCVVEVENFLFVLGGEDQWNPNGKHSTNFVSRYDPRFNSWIQLPPMQERRASFYACRLDKHLYVIGGRNETGYLSSVECYNLETNEWRYVSSLPQPLAAHAGAVHNGKIYISGGVHNGEYVPWLYCYDPVMDVWARKQDMNTKRAIHTLAVMNDRLYAIGGNHLKGFSHLDVMLVECYDPKGDQWNILQTPILEGRSGPGCAVLDDSIYLVGGYSWSMGAYKSSTICYCPEKGTWTELEGDVAEPLAGPACVTVILPSCVPYNK</sequence>
<organism>
    <name type="scientific">Homo sapiens</name>
    <name type="common">Human</name>
    <dbReference type="NCBI Taxonomy" id="9606"/>
    <lineage>
        <taxon>Eukaryota</taxon>
        <taxon>Metazoa</taxon>
        <taxon>Chordata</taxon>
        <taxon>Craniata</taxon>
        <taxon>Vertebrata</taxon>
        <taxon>Euteleostomi</taxon>
        <taxon>Mammalia</taxon>
        <taxon>Eutheria</taxon>
        <taxon>Euarchontoglires</taxon>
        <taxon>Primates</taxon>
        <taxon>Haplorrhini</taxon>
        <taxon>Catarrhini</taxon>
        <taxon>Hominidae</taxon>
        <taxon>Homo</taxon>
    </lineage>
</organism>
<feature type="chain" id="PRO_0000119117" description="Kelch-like protein 14">
    <location>
        <begin position="1"/>
        <end position="628"/>
    </location>
</feature>
<feature type="domain" description="BTB" evidence="1">
    <location>
        <begin position="33"/>
        <end position="151"/>
    </location>
</feature>
<feature type="domain" description="BACK">
    <location>
        <begin position="210"/>
        <end position="279"/>
    </location>
</feature>
<feature type="repeat" description="Kelch 1">
    <location>
        <begin position="323"/>
        <end position="372"/>
    </location>
</feature>
<feature type="repeat" description="Kelch 2">
    <location>
        <begin position="373"/>
        <end position="424"/>
    </location>
</feature>
<feature type="repeat" description="Kelch 3">
    <location>
        <begin position="425"/>
        <end position="471"/>
    </location>
</feature>
<feature type="repeat" description="Kelch 4">
    <location>
        <begin position="473"/>
        <end position="518"/>
    </location>
</feature>
<feature type="repeat" description="Kelch 5">
    <location>
        <begin position="520"/>
        <end position="570"/>
    </location>
</feature>
<feature type="repeat" description="Kelch 6">
    <location>
        <begin position="572"/>
        <end position="620"/>
    </location>
</feature>
<feature type="region of interest" description="Disordered" evidence="2">
    <location>
        <begin position="69"/>
        <end position="115"/>
    </location>
</feature>
<feature type="compositionally biased region" description="Low complexity" evidence="2">
    <location>
        <begin position="84"/>
        <end position="96"/>
    </location>
</feature>
<feature type="splice variant" id="VSP_041342" description="In isoform 2." evidence="4">
    <original>MPYNSAHHCVVEVENFLFVLGGEDQWNPNGK</original>
    <variation>TGPHPISGKQESASSPEFRRRKTREFSNNTM</variation>
    <location>
        <begin position="358"/>
        <end position="388"/>
    </location>
</feature>
<feature type="splice variant" id="VSP_041343" description="In isoform 2." evidence="4">
    <location>
        <begin position="389"/>
        <end position="628"/>
    </location>
</feature>
<keyword id="KW-0025">Alternative splicing</keyword>
<keyword id="KW-0963">Cytoplasm</keyword>
<keyword id="KW-0256">Endoplasmic reticulum</keyword>
<keyword id="KW-0880">Kelch repeat</keyword>
<keyword id="KW-0472">Membrane</keyword>
<keyword id="KW-1267">Proteomics identification</keyword>
<keyword id="KW-1185">Reference proteome</keyword>
<keyword id="KW-0677">Repeat</keyword>
<evidence type="ECO:0000255" key="1">
    <source>
        <dbReference type="PROSITE-ProRule" id="PRU00037"/>
    </source>
</evidence>
<evidence type="ECO:0000256" key="2">
    <source>
        <dbReference type="SAM" id="MobiDB-lite"/>
    </source>
</evidence>
<evidence type="ECO:0000269" key="3">
    <source>
    </source>
</evidence>
<evidence type="ECO:0000303" key="4">
    <source>
    </source>
</evidence>
<evidence type="ECO:0000305" key="5"/>
<proteinExistence type="evidence at protein level"/>
<comment type="subunit">
    <text evidence="3">Interacts with TOR1A, preferentially with the ATP-free form.</text>
</comment>
<comment type="subcellular location">
    <subcellularLocation>
        <location evidence="3">Cytoplasm</location>
        <location evidence="3">Cytosol</location>
    </subcellularLocation>
    <subcellularLocation>
        <location evidence="3">Endoplasmic reticulum membrane</location>
    </subcellularLocation>
    <text>Colocalizes with TOR1A at the endoplasmic reticulum level.</text>
</comment>
<comment type="alternative products">
    <event type="alternative splicing"/>
    <isoform>
        <id>Q9P2G3-1</id>
        <name>1</name>
        <sequence type="displayed"/>
    </isoform>
    <isoform>
        <id>Q9P2G3-2</id>
        <name>2</name>
        <sequence type="described" ref="VSP_041342 VSP_041343"/>
    </isoform>
</comment>
<comment type="sequence caution" evidence="5">
    <conflict type="erroneous initiation">
        <sequence resource="EMBL-CDS" id="BAA92622"/>
    </conflict>
    <text>Extended N-terminus.</text>
</comment>
<comment type="sequence caution" evidence="5">
    <conflict type="erroneous initiation">
        <sequence resource="EMBL-CDS" id="BAG58061"/>
    </conflict>
    <text>Truncated N-terminus.</text>
</comment>
<gene>
    <name type="primary">KLHL14</name>
    <name type="synonym">KIAA1384</name>
</gene>
<protein>
    <recommendedName>
        <fullName>Kelch-like protein 14</fullName>
    </recommendedName>
    <alternativeName>
        <fullName>Protein interactor of Torsin-1A</fullName>
        <shortName>Printor</shortName>
        <shortName>Protein interactor of torsinA</shortName>
    </alternativeName>
</protein>
<name>KLH14_HUMAN</name>
<accession>Q9P2G3</accession>
<accession>A6NNW1</accession>
<accession>B4DHA0</accession>
<accession>Q8WU41</accession>
<dbReference type="EMBL" id="AB037805">
    <property type="protein sequence ID" value="BAA92622.1"/>
    <property type="status" value="ALT_INIT"/>
    <property type="molecule type" value="mRNA"/>
</dbReference>
<dbReference type="EMBL" id="AC025887">
    <property type="status" value="NOT_ANNOTATED_CDS"/>
    <property type="molecule type" value="Genomic_DNA"/>
</dbReference>
<dbReference type="EMBL" id="CH471088">
    <property type="protein sequence ID" value="EAX01296.1"/>
    <property type="molecule type" value="Genomic_DNA"/>
</dbReference>
<dbReference type="EMBL" id="CH471088">
    <property type="protein sequence ID" value="EAX01295.1"/>
    <property type="molecule type" value="Genomic_DNA"/>
</dbReference>
<dbReference type="EMBL" id="BC021267">
    <property type="protein sequence ID" value="AAH21267.1"/>
    <property type="molecule type" value="mRNA"/>
</dbReference>
<dbReference type="EMBL" id="AK294996">
    <property type="protein sequence ID" value="BAG58061.1"/>
    <property type="status" value="ALT_INIT"/>
    <property type="molecule type" value="mRNA"/>
</dbReference>
<dbReference type="CCDS" id="CCDS32813.1">
    <molecule id="Q9P2G3-1"/>
</dbReference>
<dbReference type="RefSeq" id="NP_065856.1">
    <molecule id="Q9P2G3-1"/>
    <property type="nucleotide sequence ID" value="NM_020805.3"/>
</dbReference>
<dbReference type="SMR" id="Q9P2G3"/>
<dbReference type="BioGRID" id="121619">
    <property type="interactions" value="81"/>
</dbReference>
<dbReference type="ComplexPortal" id="CPX-8091">
    <property type="entry name" value="CRL3 E3 ubiquitin ligase complex, KLHL14 variant"/>
</dbReference>
<dbReference type="FunCoup" id="Q9P2G3">
    <property type="interactions" value="26"/>
</dbReference>
<dbReference type="IntAct" id="Q9P2G3">
    <property type="interactions" value="64"/>
</dbReference>
<dbReference type="STRING" id="9606.ENSP00000352314"/>
<dbReference type="iPTMnet" id="Q9P2G3"/>
<dbReference type="PhosphoSitePlus" id="Q9P2G3"/>
<dbReference type="BioMuta" id="KLHL14"/>
<dbReference type="DMDM" id="81175180"/>
<dbReference type="MassIVE" id="Q9P2G3"/>
<dbReference type="PaxDb" id="9606-ENSP00000352314"/>
<dbReference type="PeptideAtlas" id="Q9P2G3"/>
<dbReference type="ProteomicsDB" id="83811">
    <molecule id="Q9P2G3-1"/>
</dbReference>
<dbReference type="ProteomicsDB" id="83812">
    <molecule id="Q9P2G3-2"/>
</dbReference>
<dbReference type="Antibodypedia" id="8317">
    <property type="antibodies" value="166 antibodies from 21 providers"/>
</dbReference>
<dbReference type="DNASU" id="57565"/>
<dbReference type="Ensembl" id="ENST00000358095.4">
    <molecule id="Q9P2G3-2"/>
    <property type="protein sequence ID" value="ENSP00000350808.4"/>
    <property type="gene ID" value="ENSG00000197705.10"/>
</dbReference>
<dbReference type="Ensembl" id="ENST00000359358.9">
    <molecule id="Q9P2G3-1"/>
    <property type="protein sequence ID" value="ENSP00000352314.4"/>
    <property type="gene ID" value="ENSG00000197705.10"/>
</dbReference>
<dbReference type="GeneID" id="57565"/>
<dbReference type="KEGG" id="hsa:57565"/>
<dbReference type="MANE-Select" id="ENST00000359358.9">
    <property type="protein sequence ID" value="ENSP00000352314.4"/>
    <property type="RefSeq nucleotide sequence ID" value="NM_020805.3"/>
    <property type="RefSeq protein sequence ID" value="NP_065856.1"/>
</dbReference>
<dbReference type="UCSC" id="uc002kxm.2">
    <molecule id="Q9P2G3-1"/>
    <property type="organism name" value="human"/>
</dbReference>
<dbReference type="AGR" id="HGNC:29266"/>
<dbReference type="CTD" id="57565"/>
<dbReference type="DisGeNET" id="57565"/>
<dbReference type="GeneCards" id="KLHL14"/>
<dbReference type="HGNC" id="HGNC:29266">
    <property type="gene designation" value="KLHL14"/>
</dbReference>
<dbReference type="HPA" id="ENSG00000197705">
    <property type="expression patterns" value="Tissue enhanced (seminal vesicle, thyroid gland)"/>
</dbReference>
<dbReference type="MIM" id="613772">
    <property type="type" value="gene"/>
</dbReference>
<dbReference type="neXtProt" id="NX_Q9P2G3"/>
<dbReference type="OpenTargets" id="ENSG00000197705"/>
<dbReference type="PharmGKB" id="PA134945930"/>
<dbReference type="VEuPathDB" id="HostDB:ENSG00000197705"/>
<dbReference type="eggNOG" id="KOG4441">
    <property type="taxonomic scope" value="Eukaryota"/>
</dbReference>
<dbReference type="GeneTree" id="ENSGT00940000159556"/>
<dbReference type="HOGENOM" id="CLU_004253_14_3_1"/>
<dbReference type="InParanoid" id="Q9P2G3"/>
<dbReference type="OMA" id="RETRMQH"/>
<dbReference type="OrthoDB" id="6350321at2759"/>
<dbReference type="PAN-GO" id="Q9P2G3">
    <property type="GO annotations" value="4 GO annotations based on evolutionary models"/>
</dbReference>
<dbReference type="PhylomeDB" id="Q9P2G3"/>
<dbReference type="TreeFam" id="TF328485"/>
<dbReference type="PathwayCommons" id="Q9P2G3"/>
<dbReference type="SignaLink" id="Q9P2G3"/>
<dbReference type="BioGRID-ORCS" id="57565">
    <property type="hits" value="8 hits in 1185 CRISPR screens"/>
</dbReference>
<dbReference type="ChiTaRS" id="KLHL14">
    <property type="organism name" value="human"/>
</dbReference>
<dbReference type="GenomeRNAi" id="57565"/>
<dbReference type="Pharos" id="Q9P2G3">
    <property type="development level" value="Tbio"/>
</dbReference>
<dbReference type="PRO" id="PR:Q9P2G3"/>
<dbReference type="Proteomes" id="UP000005640">
    <property type="component" value="Chromosome 18"/>
</dbReference>
<dbReference type="RNAct" id="Q9P2G3">
    <property type="molecule type" value="protein"/>
</dbReference>
<dbReference type="Bgee" id="ENSG00000197705">
    <property type="expression patterns" value="Expressed in oviduct epithelium and 115 other cell types or tissues"/>
</dbReference>
<dbReference type="ExpressionAtlas" id="Q9P2G3">
    <property type="expression patterns" value="baseline and differential"/>
</dbReference>
<dbReference type="GO" id="GO:0015629">
    <property type="term" value="C:actin cytoskeleton"/>
    <property type="evidence" value="ECO:0000314"/>
    <property type="project" value="HPA"/>
</dbReference>
<dbReference type="GO" id="GO:0016235">
    <property type="term" value="C:aggresome"/>
    <property type="evidence" value="ECO:0000314"/>
    <property type="project" value="HPA"/>
</dbReference>
<dbReference type="GO" id="GO:0005829">
    <property type="term" value="C:cytosol"/>
    <property type="evidence" value="ECO:0000314"/>
    <property type="project" value="HPA"/>
</dbReference>
<dbReference type="GO" id="GO:0005783">
    <property type="term" value="C:endoplasmic reticulum"/>
    <property type="evidence" value="ECO:0000314"/>
    <property type="project" value="MGI"/>
</dbReference>
<dbReference type="GO" id="GO:0005789">
    <property type="term" value="C:endoplasmic reticulum membrane"/>
    <property type="evidence" value="ECO:0007669"/>
    <property type="project" value="UniProtKB-SubCell"/>
</dbReference>
<dbReference type="GO" id="GO:0043005">
    <property type="term" value="C:neuron projection"/>
    <property type="evidence" value="ECO:0000318"/>
    <property type="project" value="GO_Central"/>
</dbReference>
<dbReference type="GO" id="GO:0043025">
    <property type="term" value="C:neuronal cell body"/>
    <property type="evidence" value="ECO:0000318"/>
    <property type="project" value="GO_Central"/>
</dbReference>
<dbReference type="CDD" id="cd18453">
    <property type="entry name" value="BACK_KLHL14"/>
    <property type="match status" value="1"/>
</dbReference>
<dbReference type="CDD" id="cd18243">
    <property type="entry name" value="BTB_POZ_KLHL14_printor"/>
    <property type="match status" value="1"/>
</dbReference>
<dbReference type="FunFam" id="2.120.10.80:FF:000099">
    <property type="entry name" value="Kelch like family member 14"/>
    <property type="match status" value="1"/>
</dbReference>
<dbReference type="FunFam" id="1.25.40.420:FF:000010">
    <property type="entry name" value="Kelch-like family member 14"/>
    <property type="match status" value="1"/>
</dbReference>
<dbReference type="Gene3D" id="1.25.40.420">
    <property type="match status" value="1"/>
</dbReference>
<dbReference type="Gene3D" id="2.120.10.80">
    <property type="entry name" value="Kelch-type beta propeller"/>
    <property type="match status" value="2"/>
</dbReference>
<dbReference type="Gene3D" id="3.30.710.10">
    <property type="entry name" value="Potassium Channel Kv1.1, Chain A"/>
    <property type="match status" value="1"/>
</dbReference>
<dbReference type="InterPro" id="IPR011705">
    <property type="entry name" value="BACK"/>
</dbReference>
<dbReference type="InterPro" id="IPR017096">
    <property type="entry name" value="BTB-kelch_protein"/>
</dbReference>
<dbReference type="InterPro" id="IPR000210">
    <property type="entry name" value="BTB/POZ_dom"/>
</dbReference>
<dbReference type="InterPro" id="IPR015915">
    <property type="entry name" value="Kelch-typ_b-propeller"/>
</dbReference>
<dbReference type="InterPro" id="IPR006652">
    <property type="entry name" value="Kelch_1"/>
</dbReference>
<dbReference type="InterPro" id="IPR047027">
    <property type="entry name" value="KLHL14_BACK"/>
</dbReference>
<dbReference type="InterPro" id="IPR030584">
    <property type="entry name" value="KLHL14_BTB_POZ"/>
</dbReference>
<dbReference type="InterPro" id="IPR011333">
    <property type="entry name" value="SKP1/BTB/POZ_sf"/>
</dbReference>
<dbReference type="PANTHER" id="PTHR45632:SF6">
    <property type="entry name" value="KELCH-LIKE PROTEIN 14"/>
    <property type="match status" value="1"/>
</dbReference>
<dbReference type="PANTHER" id="PTHR45632">
    <property type="entry name" value="LD33804P"/>
    <property type="match status" value="1"/>
</dbReference>
<dbReference type="Pfam" id="PF07707">
    <property type="entry name" value="BACK"/>
    <property type="match status" value="1"/>
</dbReference>
<dbReference type="Pfam" id="PF00651">
    <property type="entry name" value="BTB"/>
    <property type="match status" value="2"/>
</dbReference>
<dbReference type="Pfam" id="PF01344">
    <property type="entry name" value="Kelch_1"/>
    <property type="match status" value="1"/>
</dbReference>
<dbReference type="Pfam" id="PF24681">
    <property type="entry name" value="Kelch_KLHDC2_KLHL20_DRC7"/>
    <property type="match status" value="1"/>
</dbReference>
<dbReference type="PIRSF" id="PIRSF037037">
    <property type="entry name" value="Kelch-like_protein_gigaxonin"/>
    <property type="match status" value="1"/>
</dbReference>
<dbReference type="SMART" id="SM00875">
    <property type="entry name" value="BACK"/>
    <property type="match status" value="1"/>
</dbReference>
<dbReference type="SMART" id="SM00225">
    <property type="entry name" value="BTB"/>
    <property type="match status" value="1"/>
</dbReference>
<dbReference type="SMART" id="SM00612">
    <property type="entry name" value="Kelch"/>
    <property type="match status" value="6"/>
</dbReference>
<dbReference type="SUPFAM" id="SSF117281">
    <property type="entry name" value="Kelch motif"/>
    <property type="match status" value="1"/>
</dbReference>
<dbReference type="SUPFAM" id="SSF54695">
    <property type="entry name" value="POZ domain"/>
    <property type="match status" value="1"/>
</dbReference>
<dbReference type="PROSITE" id="PS50097">
    <property type="entry name" value="BTB"/>
    <property type="match status" value="1"/>
</dbReference>